<comment type="function">
    <text evidence="1">Together with its co-chaperonin GroES, plays an essential role in assisting protein folding. The GroEL-GroES system forms a nano-cage that allows encapsulation of the non-native substrate proteins and provides a physical environment optimized to promote and accelerate protein folding.</text>
</comment>
<comment type="catalytic activity">
    <reaction evidence="1">
        <text>ATP + H2O + a folded polypeptide = ADP + phosphate + an unfolded polypeptide.</text>
        <dbReference type="EC" id="5.6.1.7"/>
    </reaction>
</comment>
<comment type="subunit">
    <text evidence="1">Forms a cylinder of 14 subunits composed of two heptameric rings stacked back-to-back. Interacts with the co-chaperonin GroES.</text>
</comment>
<comment type="subcellular location">
    <subcellularLocation>
        <location evidence="1">Cytoplasm</location>
    </subcellularLocation>
</comment>
<comment type="similarity">
    <text evidence="1">Belongs to the chaperonin (HSP60) family.</text>
</comment>
<organism>
    <name type="scientific">Streptococcus anginosus</name>
    <dbReference type="NCBI Taxonomy" id="1328"/>
    <lineage>
        <taxon>Bacteria</taxon>
        <taxon>Bacillati</taxon>
        <taxon>Bacillota</taxon>
        <taxon>Bacilli</taxon>
        <taxon>Lactobacillales</taxon>
        <taxon>Streptococcaceae</taxon>
        <taxon>Streptococcus</taxon>
        <taxon>Streptococcus anginosus group</taxon>
    </lineage>
</organism>
<sequence>MAKDIKFSADARSAMVRGVDILADTVKVTLGPKGRNVVLEKSFGSPLITNDGVTIAKEIELEDHFENMGAKLVSEVASKTNDIAGDGTTTATVLTQAIVREGIKNVTAGANPIGIRRGIETAVATAVEALKANSVPVSNKEAIAQVAAVSSRSEKVGEYISEAMEKVGNDGVITIEESKGMETELDVVEGMQFDRGYLSQYMVTDNEKMVADLDNPYILITDKKISNIQEILPLLENILKTSRPLLIIADDVDGEALPTLVLNKIRGTFNVVAVKAPGFGDRRKAMLEDIAILTGGTVITEDLGLELKDATIEALGQASKVTVDKDSTVIVEGSGDAEAIANRVAVIKSQIESSTSDFDREKLQERLAKLSGGVAVIKVGAATETELKEMKLRIEDALNATRAAVEEGIVSGGGTAFVNVLSAVEALDLSGDEATGRNIVLRALEEPVRQIALNAGFEGSIVIDRLKNSEAGTGFNAATGEWVNMIDAGIIDPVKVTRSALQNAASVASLILTTEAVVANQPEPASPTPAMDPSMMGGMM</sequence>
<name>CH60_STRAP</name>
<feature type="chain" id="PRO_0000063546" description="Chaperonin GroEL">
    <location>
        <begin position="1"/>
        <end position="540"/>
    </location>
</feature>
<feature type="binding site" evidence="1">
    <location>
        <begin position="29"/>
        <end position="32"/>
    </location>
    <ligand>
        <name>ATP</name>
        <dbReference type="ChEBI" id="CHEBI:30616"/>
    </ligand>
</feature>
<feature type="binding site" evidence="1">
    <location>
        <begin position="86"/>
        <end position="90"/>
    </location>
    <ligand>
        <name>ATP</name>
        <dbReference type="ChEBI" id="CHEBI:30616"/>
    </ligand>
</feature>
<feature type="binding site" evidence="1">
    <location>
        <position position="413"/>
    </location>
    <ligand>
        <name>ATP</name>
        <dbReference type="ChEBI" id="CHEBI:30616"/>
    </ligand>
</feature>
<feature type="binding site" evidence="1">
    <location>
        <begin position="476"/>
        <end position="478"/>
    </location>
    <ligand>
        <name>ATP</name>
        <dbReference type="ChEBI" id="CHEBI:30616"/>
    </ligand>
</feature>
<feature type="binding site" evidence="1">
    <location>
        <position position="492"/>
    </location>
    <ligand>
        <name>ATP</name>
        <dbReference type="ChEBI" id="CHEBI:30616"/>
    </ligand>
</feature>
<gene>
    <name evidence="1" type="primary">groEL</name>
    <name evidence="1" type="synonym">groL</name>
</gene>
<accession>Q8KJ20</accession>
<protein>
    <recommendedName>
        <fullName evidence="1">Chaperonin GroEL</fullName>
        <ecNumber evidence="1">5.6.1.7</ecNumber>
    </recommendedName>
    <alternativeName>
        <fullName evidence="1">60 kDa chaperonin</fullName>
    </alternativeName>
    <alternativeName>
        <fullName evidence="1">Chaperonin-60</fullName>
        <shortName evidence="1">Cpn60</shortName>
    </alternativeName>
</protein>
<dbReference type="EC" id="5.6.1.7" evidence="1"/>
<dbReference type="EMBL" id="AF378195">
    <property type="protein sequence ID" value="AAM46144.1"/>
    <property type="molecule type" value="Genomic_DNA"/>
</dbReference>
<dbReference type="RefSeq" id="WP_003026907.1">
    <property type="nucleotide sequence ID" value="NZ_LR134283.1"/>
</dbReference>
<dbReference type="SMR" id="Q8KJ20"/>
<dbReference type="STRING" id="862971.SANR_0269"/>
<dbReference type="GeneID" id="93964365"/>
<dbReference type="eggNOG" id="COG0459">
    <property type="taxonomic scope" value="Bacteria"/>
</dbReference>
<dbReference type="GO" id="GO:0005737">
    <property type="term" value="C:cytoplasm"/>
    <property type="evidence" value="ECO:0007669"/>
    <property type="project" value="UniProtKB-SubCell"/>
</dbReference>
<dbReference type="GO" id="GO:0005524">
    <property type="term" value="F:ATP binding"/>
    <property type="evidence" value="ECO:0007669"/>
    <property type="project" value="UniProtKB-UniRule"/>
</dbReference>
<dbReference type="GO" id="GO:0140662">
    <property type="term" value="F:ATP-dependent protein folding chaperone"/>
    <property type="evidence" value="ECO:0007669"/>
    <property type="project" value="InterPro"/>
</dbReference>
<dbReference type="GO" id="GO:0016853">
    <property type="term" value="F:isomerase activity"/>
    <property type="evidence" value="ECO:0007669"/>
    <property type="project" value="UniProtKB-KW"/>
</dbReference>
<dbReference type="GO" id="GO:0051082">
    <property type="term" value="F:unfolded protein binding"/>
    <property type="evidence" value="ECO:0007669"/>
    <property type="project" value="UniProtKB-UniRule"/>
</dbReference>
<dbReference type="GO" id="GO:0042026">
    <property type="term" value="P:protein refolding"/>
    <property type="evidence" value="ECO:0007669"/>
    <property type="project" value="UniProtKB-UniRule"/>
</dbReference>
<dbReference type="CDD" id="cd03344">
    <property type="entry name" value="GroEL"/>
    <property type="match status" value="1"/>
</dbReference>
<dbReference type="FunFam" id="1.10.560.10:FF:000001">
    <property type="entry name" value="60 kDa chaperonin"/>
    <property type="match status" value="1"/>
</dbReference>
<dbReference type="FunFam" id="3.50.7.10:FF:000001">
    <property type="entry name" value="60 kDa chaperonin"/>
    <property type="match status" value="1"/>
</dbReference>
<dbReference type="Gene3D" id="3.50.7.10">
    <property type="entry name" value="GroEL"/>
    <property type="match status" value="1"/>
</dbReference>
<dbReference type="Gene3D" id="1.10.560.10">
    <property type="entry name" value="GroEL-like equatorial domain"/>
    <property type="match status" value="1"/>
</dbReference>
<dbReference type="Gene3D" id="3.30.260.10">
    <property type="entry name" value="TCP-1-like chaperonin intermediate domain"/>
    <property type="match status" value="1"/>
</dbReference>
<dbReference type="HAMAP" id="MF_00600">
    <property type="entry name" value="CH60"/>
    <property type="match status" value="1"/>
</dbReference>
<dbReference type="InterPro" id="IPR018370">
    <property type="entry name" value="Chaperonin_Cpn60_CS"/>
</dbReference>
<dbReference type="InterPro" id="IPR001844">
    <property type="entry name" value="Cpn60/GroEL"/>
</dbReference>
<dbReference type="InterPro" id="IPR002423">
    <property type="entry name" value="Cpn60/GroEL/TCP-1"/>
</dbReference>
<dbReference type="InterPro" id="IPR027409">
    <property type="entry name" value="GroEL-like_apical_dom_sf"/>
</dbReference>
<dbReference type="InterPro" id="IPR027413">
    <property type="entry name" value="GROEL-like_equatorial_sf"/>
</dbReference>
<dbReference type="InterPro" id="IPR027410">
    <property type="entry name" value="TCP-1-like_intermed_sf"/>
</dbReference>
<dbReference type="NCBIfam" id="TIGR02348">
    <property type="entry name" value="GroEL"/>
    <property type="match status" value="1"/>
</dbReference>
<dbReference type="NCBIfam" id="NF000592">
    <property type="entry name" value="PRK00013.1"/>
    <property type="match status" value="1"/>
</dbReference>
<dbReference type="NCBIfam" id="NF009487">
    <property type="entry name" value="PRK12849.1"/>
    <property type="match status" value="1"/>
</dbReference>
<dbReference type="NCBIfam" id="NF009488">
    <property type="entry name" value="PRK12850.1"/>
    <property type="match status" value="1"/>
</dbReference>
<dbReference type="NCBIfam" id="NF009489">
    <property type="entry name" value="PRK12851.1"/>
    <property type="match status" value="1"/>
</dbReference>
<dbReference type="PANTHER" id="PTHR45633">
    <property type="entry name" value="60 KDA HEAT SHOCK PROTEIN, MITOCHONDRIAL"/>
    <property type="match status" value="1"/>
</dbReference>
<dbReference type="Pfam" id="PF00118">
    <property type="entry name" value="Cpn60_TCP1"/>
    <property type="match status" value="1"/>
</dbReference>
<dbReference type="PRINTS" id="PR00298">
    <property type="entry name" value="CHAPERONIN60"/>
</dbReference>
<dbReference type="SUPFAM" id="SSF52029">
    <property type="entry name" value="GroEL apical domain-like"/>
    <property type="match status" value="1"/>
</dbReference>
<dbReference type="SUPFAM" id="SSF48592">
    <property type="entry name" value="GroEL equatorial domain-like"/>
    <property type="match status" value="1"/>
</dbReference>
<dbReference type="SUPFAM" id="SSF54849">
    <property type="entry name" value="GroEL-intermediate domain like"/>
    <property type="match status" value="1"/>
</dbReference>
<dbReference type="PROSITE" id="PS00296">
    <property type="entry name" value="CHAPERONINS_CPN60"/>
    <property type="match status" value="1"/>
</dbReference>
<evidence type="ECO:0000255" key="1">
    <source>
        <dbReference type="HAMAP-Rule" id="MF_00600"/>
    </source>
</evidence>
<reference key="1">
    <citation type="journal article" date="2002" name="J. Clin. Microbiol.">
        <title>groESL sequence determination, phylogenetic analysis, and species differentiation for viridans group streptococci.</title>
        <authorList>
            <person name="Teng L.-J."/>
            <person name="Hsueh P.R."/>
            <person name="Tsai J.C."/>
            <person name="Chen P.-W."/>
            <person name="Hsu J.-C."/>
            <person name="Lai H.C."/>
            <person name="Lee C.N."/>
            <person name="Ho S.W."/>
        </authorList>
    </citation>
    <scope>NUCLEOTIDE SEQUENCE [GENOMIC DNA]</scope>
</reference>
<proteinExistence type="inferred from homology"/>
<keyword id="KW-0067">ATP-binding</keyword>
<keyword id="KW-0143">Chaperone</keyword>
<keyword id="KW-0963">Cytoplasm</keyword>
<keyword id="KW-0413">Isomerase</keyword>
<keyword id="KW-0547">Nucleotide-binding</keyword>